<dbReference type="EMBL" id="AF065161">
    <property type="protein sequence ID" value="AAC17502.1"/>
    <property type="molecule type" value="mRNA"/>
</dbReference>
<dbReference type="EMBL" id="AF294256">
    <property type="protein sequence ID" value="AAG29815.1"/>
    <property type="molecule type" value="Genomic_DNA"/>
</dbReference>
<dbReference type="SMR" id="O70512"/>
<dbReference type="FunCoup" id="O70512">
    <property type="interactions" value="34"/>
</dbReference>
<dbReference type="STRING" id="10116.ENSRNOP00000041734"/>
<dbReference type="GlyGen" id="O70512">
    <property type="glycosylation" value="1 site"/>
</dbReference>
<dbReference type="iPTMnet" id="O70512"/>
<dbReference type="PhosphoSitePlus" id="O70512"/>
<dbReference type="PaxDb" id="10116-ENSRNOP00000041734"/>
<dbReference type="UCSC" id="RGD:69261">
    <property type="organism name" value="rat"/>
</dbReference>
<dbReference type="AGR" id="RGD:69261"/>
<dbReference type="RGD" id="69261">
    <property type="gene designation" value="Cish"/>
</dbReference>
<dbReference type="eggNOG" id="KOG4566">
    <property type="taxonomic scope" value="Eukaryota"/>
</dbReference>
<dbReference type="InParanoid" id="O70512"/>
<dbReference type="Reactome" id="R-RNO-8951664">
    <property type="pathway name" value="Neddylation"/>
</dbReference>
<dbReference type="UniPathway" id="UPA00143"/>
<dbReference type="Proteomes" id="UP000002494">
    <property type="component" value="Unplaced"/>
</dbReference>
<dbReference type="GO" id="GO:0005886">
    <property type="term" value="C:plasma membrane"/>
    <property type="evidence" value="ECO:0000266"/>
    <property type="project" value="RGD"/>
</dbReference>
<dbReference type="GO" id="GO:0005126">
    <property type="term" value="F:cytokine receptor binding"/>
    <property type="evidence" value="ECO:0000318"/>
    <property type="project" value="GO_Central"/>
</dbReference>
<dbReference type="GO" id="GO:0019221">
    <property type="term" value="P:cytokine-mediated signaling pathway"/>
    <property type="evidence" value="ECO:0000270"/>
    <property type="project" value="RGD"/>
</dbReference>
<dbReference type="GO" id="GO:0035556">
    <property type="term" value="P:intracellular signal transduction"/>
    <property type="evidence" value="ECO:0007669"/>
    <property type="project" value="InterPro"/>
</dbReference>
<dbReference type="GO" id="GO:0001960">
    <property type="term" value="P:negative regulation of cytokine-mediated signaling pathway"/>
    <property type="evidence" value="ECO:0000266"/>
    <property type="project" value="RGD"/>
</dbReference>
<dbReference type="GO" id="GO:0046426">
    <property type="term" value="P:negative regulation of receptor signaling pathway via JAK-STAT"/>
    <property type="evidence" value="ECO:0000318"/>
    <property type="project" value="GO_Central"/>
</dbReference>
<dbReference type="GO" id="GO:0016567">
    <property type="term" value="P:protein ubiquitination"/>
    <property type="evidence" value="ECO:0007669"/>
    <property type="project" value="UniProtKB-UniPathway"/>
</dbReference>
<dbReference type="CDD" id="cd10718">
    <property type="entry name" value="SH2_CIS"/>
    <property type="match status" value="1"/>
</dbReference>
<dbReference type="CDD" id="cd03734">
    <property type="entry name" value="SOCS_CIS1"/>
    <property type="match status" value="1"/>
</dbReference>
<dbReference type="FunFam" id="3.30.505.10:FF:000042">
    <property type="entry name" value="Cytokine-inducible SH2-containing protein b"/>
    <property type="match status" value="1"/>
</dbReference>
<dbReference type="FunFam" id="1.10.750.20:FF:000002">
    <property type="entry name" value="Suppressor of cytokine signaling 2"/>
    <property type="match status" value="1"/>
</dbReference>
<dbReference type="Gene3D" id="3.30.505.10">
    <property type="entry name" value="SH2 domain"/>
    <property type="match status" value="1"/>
</dbReference>
<dbReference type="Gene3D" id="1.10.750.20">
    <property type="entry name" value="SOCS box"/>
    <property type="match status" value="1"/>
</dbReference>
<dbReference type="InterPro" id="IPR035887">
    <property type="entry name" value="CIS_SH2"/>
</dbReference>
<dbReference type="InterPro" id="IPR000980">
    <property type="entry name" value="SH2"/>
</dbReference>
<dbReference type="InterPro" id="IPR036860">
    <property type="entry name" value="SH2_dom_sf"/>
</dbReference>
<dbReference type="InterPro" id="IPR001496">
    <property type="entry name" value="SOCS_box"/>
</dbReference>
<dbReference type="InterPro" id="IPR036036">
    <property type="entry name" value="SOCS_box-like_dom_sf"/>
</dbReference>
<dbReference type="PANTHER" id="PTHR10155:SF9">
    <property type="entry name" value="CYTOKINE-INDUCIBLE SH2-CONTAINING PROTEIN"/>
    <property type="match status" value="1"/>
</dbReference>
<dbReference type="PANTHER" id="PTHR10155">
    <property type="entry name" value="PHOSPHATIDYLINOSITOL 3-KINASE REGULATORY SUBUNIT"/>
    <property type="match status" value="1"/>
</dbReference>
<dbReference type="Pfam" id="PF00017">
    <property type="entry name" value="SH2"/>
    <property type="match status" value="1"/>
</dbReference>
<dbReference type="Pfam" id="PF07525">
    <property type="entry name" value="SOCS_box"/>
    <property type="match status" value="1"/>
</dbReference>
<dbReference type="PRINTS" id="PR00401">
    <property type="entry name" value="SH2DOMAIN"/>
</dbReference>
<dbReference type="SMART" id="SM00252">
    <property type="entry name" value="SH2"/>
    <property type="match status" value="1"/>
</dbReference>
<dbReference type="SMART" id="SM00253">
    <property type="entry name" value="SOCS"/>
    <property type="match status" value="1"/>
</dbReference>
<dbReference type="SMART" id="SM00969">
    <property type="entry name" value="SOCS_box"/>
    <property type="match status" value="1"/>
</dbReference>
<dbReference type="SUPFAM" id="SSF55550">
    <property type="entry name" value="SH2 domain"/>
    <property type="match status" value="1"/>
</dbReference>
<dbReference type="SUPFAM" id="SSF158235">
    <property type="entry name" value="SOCS box-like"/>
    <property type="match status" value="1"/>
</dbReference>
<dbReference type="PROSITE" id="PS50001">
    <property type="entry name" value="SH2"/>
    <property type="match status" value="1"/>
</dbReference>
<dbReference type="PROSITE" id="PS50225">
    <property type="entry name" value="SOCS"/>
    <property type="match status" value="1"/>
</dbReference>
<accession>O70512</accession>
<accession>Q9ERQ1</accession>
<name>CISH_RAT</name>
<gene>
    <name type="primary">Cish</name>
</gene>
<feature type="chain" id="PRO_0000181233" description="Cytokine-inducible SH2-containing protein">
    <location>
        <begin position="1" status="less than"/>
        <end position="256"/>
    </location>
</feature>
<feature type="domain" description="SH2" evidence="2">
    <location>
        <begin position="81"/>
        <end position="162"/>
    </location>
</feature>
<feature type="domain" description="SOCS box" evidence="3">
    <location>
        <begin position="207"/>
        <end position="255"/>
    </location>
</feature>
<feature type="region of interest" description="Disordered" evidence="4">
    <location>
        <begin position="168"/>
        <end position="190"/>
    </location>
</feature>
<feature type="non-terminal residue">
    <location>
        <position position="1"/>
    </location>
</feature>
<evidence type="ECO:0000250" key="1"/>
<evidence type="ECO:0000255" key="2">
    <source>
        <dbReference type="PROSITE-ProRule" id="PRU00191"/>
    </source>
</evidence>
<evidence type="ECO:0000255" key="3">
    <source>
        <dbReference type="PROSITE-ProRule" id="PRU00194"/>
    </source>
</evidence>
<evidence type="ECO:0000256" key="4">
    <source>
        <dbReference type="SAM" id="MobiDB-lite"/>
    </source>
</evidence>
<protein>
    <recommendedName>
        <fullName>Cytokine-inducible SH2-containing protein</fullName>
        <shortName>CIS</shortName>
    </recommendedName>
    <alternativeName>
        <fullName>CIS-1</fullName>
    </alternativeName>
    <alternativeName>
        <fullName>Suppressor of cytokine signaling</fullName>
        <shortName>SOCS</shortName>
    </alternativeName>
</protein>
<sequence length="256" mass="28399">VLCVQGSCPLLVVEQIGQRPLWAQSLELPGPAMQPLPTGAFPEEVTEETPVQSENEPKVLDPEGDLLCIAKTFSYLRESGWYWGSITASEARQHLQKMPEGTFLVRDSTHPSYLFTLSVKTTRGPTNVRIEYADSSFRLDSNCLSRPRILAFPDVVSLVQHYVASCTADTRSDSPDPAPTPALPVSKPDAPGDPVLPIPVATAVHLKLVQPFVRRSSARSLQHLCRLVINRLVTDVDCLPLPRRMADYLRQYPFQL</sequence>
<proteinExistence type="evidence at transcript level"/>
<keyword id="KW-0341">Growth regulation</keyword>
<keyword id="KW-1185">Reference proteome</keyword>
<keyword id="KW-0727">SH2 domain</keyword>
<keyword id="KW-0734">Signal transduction inhibitor</keyword>
<keyword id="KW-0833">Ubl conjugation pathway</keyword>
<comment type="function">
    <text evidence="1">SOCS family proteins form part of a classical negative feedback system that regulates cytokine signal transduction. CIS is involved in the negative regulation of cytokines that signal through the JAK-STAT5 pathway such as erythropoietin, prolactin and interleukin 3 (IL3) receptor. Inhibits STAT5 trans-activation by suppressing its tyrosine phosphorylation (By similarity). May be a substrate recognition component of a SCF-like ECS (Elongin BC-CUL2/5-SOCS-box protein) E3 ubiquitin-protein ligase complex which mediates the ubiquitination and subsequent proteasomal degradation of target proteins (By similarity).</text>
</comment>
<comment type="pathway">
    <text>Protein modification; protein ubiquitination.</text>
</comment>
<comment type="subunit">
    <text evidence="1">Stably associated with the tyrosine-phosphorylated IL3 receptor beta chain and tyrosine-phosphorylated EPO receptor (EPOR).</text>
</comment>
<organism>
    <name type="scientific">Rattus norvegicus</name>
    <name type="common">Rat</name>
    <dbReference type="NCBI Taxonomy" id="10116"/>
    <lineage>
        <taxon>Eukaryota</taxon>
        <taxon>Metazoa</taxon>
        <taxon>Chordata</taxon>
        <taxon>Craniata</taxon>
        <taxon>Vertebrata</taxon>
        <taxon>Euteleostomi</taxon>
        <taxon>Mammalia</taxon>
        <taxon>Eutheria</taxon>
        <taxon>Euarchontoglires</taxon>
        <taxon>Glires</taxon>
        <taxon>Rodentia</taxon>
        <taxon>Myomorpha</taxon>
        <taxon>Muroidea</taxon>
        <taxon>Muridae</taxon>
        <taxon>Murinae</taxon>
        <taxon>Rattus</taxon>
    </lineage>
</organism>
<reference key="1">
    <citation type="journal article" date="1999" name="Endocrinology">
        <title>Endotoxin-induced inhibition of growth hormone receptor signaling in rat liver in vivo.</title>
        <authorList>
            <person name="Mao Y."/>
            <person name="Ling P.R."/>
            <person name="Fitzgibbons T.P."/>
            <person name="McCowen K.C."/>
            <person name="Frick G.P."/>
            <person name="Bistrian B.R."/>
            <person name="Smith R.J."/>
        </authorList>
    </citation>
    <scope>NUCLEOTIDE SEQUENCE</scope>
    <source>
        <strain>Sprague-Dawley</strain>
        <tissue>Liver</tissue>
    </source>
</reference>
<reference key="2">
    <citation type="submission" date="2000-08" db="EMBL/GenBank/DDBJ databases">
        <title>Cytokine inducible SH2-containing protein (CIS) from rat liver.</title>
        <authorList>
            <person name="Siebenson L.N."/>
            <person name="Berry S.A."/>
        </authorList>
    </citation>
    <scope>NUCLEOTIDE SEQUENCE OF 51-163</scope>
    <source>
        <strain>Sprague-Dawley</strain>
        <tissue>Liver</tissue>
    </source>
</reference>